<gene>
    <name evidence="1" type="primary">upp</name>
    <name type="ordered locus">BAV0847</name>
</gene>
<evidence type="ECO:0000255" key="1">
    <source>
        <dbReference type="HAMAP-Rule" id="MF_01218"/>
    </source>
</evidence>
<accession>Q2KWB3</accession>
<comment type="function">
    <text evidence="1">Catalyzes the conversion of uracil and 5-phospho-alpha-D-ribose 1-diphosphate (PRPP) to UMP and diphosphate.</text>
</comment>
<comment type="catalytic activity">
    <reaction evidence="1">
        <text>UMP + diphosphate = 5-phospho-alpha-D-ribose 1-diphosphate + uracil</text>
        <dbReference type="Rhea" id="RHEA:13017"/>
        <dbReference type="ChEBI" id="CHEBI:17568"/>
        <dbReference type="ChEBI" id="CHEBI:33019"/>
        <dbReference type="ChEBI" id="CHEBI:57865"/>
        <dbReference type="ChEBI" id="CHEBI:58017"/>
        <dbReference type="EC" id="2.4.2.9"/>
    </reaction>
</comment>
<comment type="cofactor">
    <cofactor evidence="1">
        <name>Mg(2+)</name>
        <dbReference type="ChEBI" id="CHEBI:18420"/>
    </cofactor>
    <text evidence="1">Binds 1 Mg(2+) ion per subunit. The magnesium is bound as Mg-PRPP.</text>
</comment>
<comment type="activity regulation">
    <text evidence="1">Allosterically activated by GTP.</text>
</comment>
<comment type="pathway">
    <text evidence="1">Pyrimidine metabolism; UMP biosynthesis via salvage pathway; UMP from uracil: step 1/1.</text>
</comment>
<comment type="similarity">
    <text evidence="1">Belongs to the UPRTase family.</text>
</comment>
<keyword id="KW-0021">Allosteric enzyme</keyword>
<keyword id="KW-0328">Glycosyltransferase</keyword>
<keyword id="KW-0342">GTP-binding</keyword>
<keyword id="KW-0460">Magnesium</keyword>
<keyword id="KW-0547">Nucleotide-binding</keyword>
<keyword id="KW-1185">Reference proteome</keyword>
<keyword id="KW-0808">Transferase</keyword>
<dbReference type="EC" id="2.4.2.9" evidence="1"/>
<dbReference type="EMBL" id="AM167904">
    <property type="protein sequence ID" value="CAJ48458.1"/>
    <property type="molecule type" value="Genomic_DNA"/>
</dbReference>
<dbReference type="RefSeq" id="WP_012416539.1">
    <property type="nucleotide sequence ID" value="NC_010645.1"/>
</dbReference>
<dbReference type="SMR" id="Q2KWB3"/>
<dbReference type="STRING" id="360910.BAV0847"/>
<dbReference type="GeneID" id="92935963"/>
<dbReference type="KEGG" id="bav:BAV0847"/>
<dbReference type="eggNOG" id="COG0035">
    <property type="taxonomic scope" value="Bacteria"/>
</dbReference>
<dbReference type="HOGENOM" id="CLU_067096_2_2_4"/>
<dbReference type="OrthoDB" id="9781675at2"/>
<dbReference type="UniPathway" id="UPA00574">
    <property type="reaction ID" value="UER00636"/>
</dbReference>
<dbReference type="Proteomes" id="UP000001977">
    <property type="component" value="Chromosome"/>
</dbReference>
<dbReference type="GO" id="GO:0005525">
    <property type="term" value="F:GTP binding"/>
    <property type="evidence" value="ECO:0007669"/>
    <property type="project" value="UniProtKB-KW"/>
</dbReference>
<dbReference type="GO" id="GO:0000287">
    <property type="term" value="F:magnesium ion binding"/>
    <property type="evidence" value="ECO:0007669"/>
    <property type="project" value="UniProtKB-UniRule"/>
</dbReference>
<dbReference type="GO" id="GO:0004845">
    <property type="term" value="F:uracil phosphoribosyltransferase activity"/>
    <property type="evidence" value="ECO:0007669"/>
    <property type="project" value="UniProtKB-UniRule"/>
</dbReference>
<dbReference type="GO" id="GO:0044206">
    <property type="term" value="P:UMP salvage"/>
    <property type="evidence" value="ECO:0007669"/>
    <property type="project" value="UniProtKB-UniRule"/>
</dbReference>
<dbReference type="GO" id="GO:0006223">
    <property type="term" value="P:uracil salvage"/>
    <property type="evidence" value="ECO:0007669"/>
    <property type="project" value="InterPro"/>
</dbReference>
<dbReference type="CDD" id="cd06223">
    <property type="entry name" value="PRTases_typeI"/>
    <property type="match status" value="1"/>
</dbReference>
<dbReference type="FunFam" id="3.40.50.2020:FF:000003">
    <property type="entry name" value="Uracil phosphoribosyltransferase"/>
    <property type="match status" value="1"/>
</dbReference>
<dbReference type="Gene3D" id="3.40.50.2020">
    <property type="match status" value="1"/>
</dbReference>
<dbReference type="HAMAP" id="MF_01218_B">
    <property type="entry name" value="Upp_B"/>
    <property type="match status" value="1"/>
</dbReference>
<dbReference type="InterPro" id="IPR000836">
    <property type="entry name" value="PRibTrfase_dom"/>
</dbReference>
<dbReference type="InterPro" id="IPR029057">
    <property type="entry name" value="PRTase-like"/>
</dbReference>
<dbReference type="InterPro" id="IPR034332">
    <property type="entry name" value="Upp_B"/>
</dbReference>
<dbReference type="InterPro" id="IPR050054">
    <property type="entry name" value="UPRTase/APRTase"/>
</dbReference>
<dbReference type="InterPro" id="IPR005765">
    <property type="entry name" value="Ura_phspho_trans"/>
</dbReference>
<dbReference type="NCBIfam" id="NF001097">
    <property type="entry name" value="PRK00129.1"/>
    <property type="match status" value="1"/>
</dbReference>
<dbReference type="NCBIfam" id="TIGR01091">
    <property type="entry name" value="upp"/>
    <property type="match status" value="1"/>
</dbReference>
<dbReference type="PANTHER" id="PTHR32315">
    <property type="entry name" value="ADENINE PHOSPHORIBOSYLTRANSFERASE"/>
    <property type="match status" value="1"/>
</dbReference>
<dbReference type="PANTHER" id="PTHR32315:SF4">
    <property type="entry name" value="URACIL PHOSPHORIBOSYLTRANSFERASE, CHLOROPLASTIC"/>
    <property type="match status" value="1"/>
</dbReference>
<dbReference type="Pfam" id="PF14681">
    <property type="entry name" value="UPRTase"/>
    <property type="match status" value="1"/>
</dbReference>
<dbReference type="SUPFAM" id="SSF53271">
    <property type="entry name" value="PRTase-like"/>
    <property type="match status" value="1"/>
</dbReference>
<feature type="chain" id="PRO_1000053680" description="Uracil phosphoribosyltransferase">
    <location>
        <begin position="1"/>
        <end position="212"/>
    </location>
</feature>
<feature type="binding site" evidence="1">
    <location>
        <position position="78"/>
    </location>
    <ligand>
        <name>5-phospho-alpha-D-ribose 1-diphosphate</name>
        <dbReference type="ChEBI" id="CHEBI:58017"/>
    </ligand>
</feature>
<feature type="binding site" evidence="1">
    <location>
        <position position="103"/>
    </location>
    <ligand>
        <name>5-phospho-alpha-D-ribose 1-diphosphate</name>
        <dbReference type="ChEBI" id="CHEBI:58017"/>
    </ligand>
</feature>
<feature type="binding site" evidence="1">
    <location>
        <begin position="130"/>
        <end position="138"/>
    </location>
    <ligand>
        <name>5-phospho-alpha-D-ribose 1-diphosphate</name>
        <dbReference type="ChEBI" id="CHEBI:58017"/>
    </ligand>
</feature>
<feature type="binding site" evidence="1">
    <location>
        <position position="193"/>
    </location>
    <ligand>
        <name>uracil</name>
        <dbReference type="ChEBI" id="CHEBI:17568"/>
    </ligand>
</feature>
<feature type="binding site" evidence="1">
    <location>
        <begin position="198"/>
        <end position="200"/>
    </location>
    <ligand>
        <name>uracil</name>
        <dbReference type="ChEBI" id="CHEBI:17568"/>
    </ligand>
</feature>
<feature type="binding site" evidence="1">
    <location>
        <position position="199"/>
    </location>
    <ligand>
        <name>5-phospho-alpha-D-ribose 1-diphosphate</name>
        <dbReference type="ChEBI" id="CHEBI:58017"/>
    </ligand>
</feature>
<proteinExistence type="inferred from homology"/>
<protein>
    <recommendedName>
        <fullName evidence="1">Uracil phosphoribosyltransferase</fullName>
        <ecNumber evidence="1">2.4.2.9</ecNumber>
    </recommendedName>
    <alternativeName>
        <fullName evidence="1">UMP pyrophosphorylase</fullName>
    </alternativeName>
    <alternativeName>
        <fullName evidence="1">UPRTase</fullName>
    </alternativeName>
</protein>
<sequence length="212" mass="22799">MPVHEIRHPLVRHKLGIMRRVDLSTKSFRELSQEVAALLTYEASKDMALAPATVEGWCGTVEVEKIAGKKVTVVPILRAGIGMLDGVLSLIPGAKVSVVGLARNEETLQAHTYLERLVGELDQRLALIVDPMLATGGSMVATIDMLKRAGAREIRALTLVAAPEGIKAVLDAHPDVNIYTASIDQGLNEQGYIMPGLGDAGDRIFGTKQKVE</sequence>
<name>UPP_BORA1</name>
<reference key="1">
    <citation type="journal article" date="2006" name="J. Bacteriol.">
        <title>Comparison of the genome sequence of the poultry pathogen Bordetella avium with those of B. bronchiseptica, B. pertussis, and B. parapertussis reveals extensive diversity in surface structures associated with host interaction.</title>
        <authorList>
            <person name="Sebaihia M."/>
            <person name="Preston A."/>
            <person name="Maskell D.J."/>
            <person name="Kuzmiak H."/>
            <person name="Connell T.D."/>
            <person name="King N.D."/>
            <person name="Orndorff P.E."/>
            <person name="Miyamoto D.M."/>
            <person name="Thomson N.R."/>
            <person name="Harris D."/>
            <person name="Goble A."/>
            <person name="Lord A."/>
            <person name="Murphy L."/>
            <person name="Quail M.A."/>
            <person name="Rutter S."/>
            <person name="Squares R."/>
            <person name="Squares S."/>
            <person name="Woodward J."/>
            <person name="Parkhill J."/>
            <person name="Temple L.M."/>
        </authorList>
    </citation>
    <scope>NUCLEOTIDE SEQUENCE [LARGE SCALE GENOMIC DNA]</scope>
    <source>
        <strain>197N</strain>
    </source>
</reference>
<organism>
    <name type="scientific">Bordetella avium (strain 197N)</name>
    <dbReference type="NCBI Taxonomy" id="360910"/>
    <lineage>
        <taxon>Bacteria</taxon>
        <taxon>Pseudomonadati</taxon>
        <taxon>Pseudomonadota</taxon>
        <taxon>Betaproteobacteria</taxon>
        <taxon>Burkholderiales</taxon>
        <taxon>Alcaligenaceae</taxon>
        <taxon>Bordetella</taxon>
    </lineage>
</organism>